<name>RIMO_CLOAB</name>
<protein>
    <recommendedName>
        <fullName evidence="1">Ribosomal protein uS12 methylthiotransferase RimO</fullName>
        <shortName evidence="1">uS12 MTTase</shortName>
        <shortName evidence="1">uS12 methylthiotransferase</shortName>
        <ecNumber evidence="1">2.8.4.4</ecNumber>
    </recommendedName>
    <alternativeName>
        <fullName evidence="1">Ribosomal protein uS12 (aspartate-C(3))-methylthiotransferase</fullName>
    </alternativeName>
    <alternativeName>
        <fullName evidence="1">Ribosome maturation factor RimO</fullName>
    </alternativeName>
</protein>
<proteinExistence type="inferred from homology"/>
<evidence type="ECO:0000255" key="1">
    <source>
        <dbReference type="HAMAP-Rule" id="MF_01865"/>
    </source>
</evidence>
<evidence type="ECO:0000255" key="2">
    <source>
        <dbReference type="PROSITE-ProRule" id="PRU01266"/>
    </source>
</evidence>
<feature type="chain" id="PRO_0000374774" description="Ribosomal protein uS12 methylthiotransferase RimO">
    <location>
        <begin position="1"/>
        <end position="445"/>
    </location>
</feature>
<feature type="domain" description="MTTase N-terminal" evidence="1">
    <location>
        <begin position="4"/>
        <end position="119"/>
    </location>
</feature>
<feature type="domain" description="Radical SAM core" evidence="2">
    <location>
        <begin position="142"/>
        <end position="372"/>
    </location>
</feature>
<feature type="domain" description="TRAM" evidence="1">
    <location>
        <begin position="375"/>
        <end position="441"/>
    </location>
</feature>
<feature type="binding site" evidence="1">
    <location>
        <position position="13"/>
    </location>
    <ligand>
        <name>[4Fe-4S] cluster</name>
        <dbReference type="ChEBI" id="CHEBI:49883"/>
        <label>1</label>
    </ligand>
</feature>
<feature type="binding site" evidence="1">
    <location>
        <position position="48"/>
    </location>
    <ligand>
        <name>[4Fe-4S] cluster</name>
        <dbReference type="ChEBI" id="CHEBI:49883"/>
        <label>1</label>
    </ligand>
</feature>
<feature type="binding site" evidence="1">
    <location>
        <position position="82"/>
    </location>
    <ligand>
        <name>[4Fe-4S] cluster</name>
        <dbReference type="ChEBI" id="CHEBI:49883"/>
        <label>1</label>
    </ligand>
</feature>
<feature type="binding site" evidence="1">
    <location>
        <position position="156"/>
    </location>
    <ligand>
        <name>[4Fe-4S] cluster</name>
        <dbReference type="ChEBI" id="CHEBI:49883"/>
        <label>2</label>
        <note>4Fe-4S-S-AdoMet</note>
    </ligand>
</feature>
<feature type="binding site" evidence="1">
    <location>
        <position position="160"/>
    </location>
    <ligand>
        <name>[4Fe-4S] cluster</name>
        <dbReference type="ChEBI" id="CHEBI:49883"/>
        <label>2</label>
        <note>4Fe-4S-S-AdoMet</note>
    </ligand>
</feature>
<feature type="binding site" evidence="1">
    <location>
        <position position="163"/>
    </location>
    <ligand>
        <name>[4Fe-4S] cluster</name>
        <dbReference type="ChEBI" id="CHEBI:49883"/>
        <label>2</label>
        <note>4Fe-4S-S-AdoMet</note>
    </ligand>
</feature>
<gene>
    <name evidence="1" type="primary">rimO</name>
    <name type="ordered locus">CA_C1813</name>
</gene>
<sequence>MDKLKFGLVSLGCDKNRVDSEIILGSMNRDYEIVNDPREADVILVNTCGFIESAKQESINTILEMNKYKEKYNCKMLIATGCLTQRYGKELKELVPEIDAILGVNDYKSLDDAIEDFFNLGKKDIYCNYSDQSINEGKRIITTGEYSSYVRISEGCNNSCSYCIIPKIRGKYRSRQFENIIDEVRELSENGTKEVILIAQDTTRYGVDLYGRKRLHELLKEMSLIQGIEWIRIMYCYPEEITEELIEEIASNEKVCNYIDMPIQHISDNILKNMFRKTRKSEILDKVEKIRKKVPNIAIRTSLIVGFPGETEGDFNELCDFVKDANINNLGVFRYSREEGTKAALMPMQIADTVKEKREEDIMLIQQQVSKNLNAKKIGKVYKVIVEGFNGDYWYGRNFEMAPEIDGKVFFKSQSEIKVGSFINIKITENLEYDLIGVVYNEFSK</sequence>
<accession>Q97I40</accession>
<keyword id="KW-0004">4Fe-4S</keyword>
<keyword id="KW-0963">Cytoplasm</keyword>
<keyword id="KW-0408">Iron</keyword>
<keyword id="KW-0411">Iron-sulfur</keyword>
<keyword id="KW-0479">Metal-binding</keyword>
<keyword id="KW-1185">Reference proteome</keyword>
<keyword id="KW-0949">S-adenosyl-L-methionine</keyword>
<keyword id="KW-0808">Transferase</keyword>
<organism>
    <name type="scientific">Clostridium acetobutylicum (strain ATCC 824 / DSM 792 / JCM 1419 / IAM 19013 / LMG 5710 / NBRC 13948 / NRRL B-527 / VKM B-1787 / 2291 / W)</name>
    <dbReference type="NCBI Taxonomy" id="272562"/>
    <lineage>
        <taxon>Bacteria</taxon>
        <taxon>Bacillati</taxon>
        <taxon>Bacillota</taxon>
        <taxon>Clostridia</taxon>
        <taxon>Eubacteriales</taxon>
        <taxon>Clostridiaceae</taxon>
        <taxon>Clostridium</taxon>
    </lineage>
</organism>
<dbReference type="EC" id="2.8.4.4" evidence="1"/>
<dbReference type="EMBL" id="AE001437">
    <property type="protein sequence ID" value="AAK79778.1"/>
    <property type="molecule type" value="Genomic_DNA"/>
</dbReference>
<dbReference type="PIR" id="G97123">
    <property type="entry name" value="G97123"/>
</dbReference>
<dbReference type="RefSeq" id="NP_348438.1">
    <property type="nucleotide sequence ID" value="NC_003030.1"/>
</dbReference>
<dbReference type="RefSeq" id="WP_010965119.1">
    <property type="nucleotide sequence ID" value="NC_003030.1"/>
</dbReference>
<dbReference type="SMR" id="Q97I40"/>
<dbReference type="STRING" id="272562.CA_C1813"/>
<dbReference type="GeneID" id="44998307"/>
<dbReference type="KEGG" id="cac:CA_C1813"/>
<dbReference type="PATRIC" id="fig|272562.8.peg.2019"/>
<dbReference type="eggNOG" id="COG0621">
    <property type="taxonomic scope" value="Bacteria"/>
</dbReference>
<dbReference type="HOGENOM" id="CLU_018697_0_1_9"/>
<dbReference type="OrthoDB" id="9805215at2"/>
<dbReference type="Proteomes" id="UP000000814">
    <property type="component" value="Chromosome"/>
</dbReference>
<dbReference type="GO" id="GO:0005829">
    <property type="term" value="C:cytosol"/>
    <property type="evidence" value="ECO:0007669"/>
    <property type="project" value="TreeGrafter"/>
</dbReference>
<dbReference type="GO" id="GO:0051539">
    <property type="term" value="F:4 iron, 4 sulfur cluster binding"/>
    <property type="evidence" value="ECO:0007669"/>
    <property type="project" value="UniProtKB-UniRule"/>
</dbReference>
<dbReference type="GO" id="GO:0035599">
    <property type="term" value="F:aspartic acid methylthiotransferase activity"/>
    <property type="evidence" value="ECO:0007669"/>
    <property type="project" value="TreeGrafter"/>
</dbReference>
<dbReference type="GO" id="GO:0046872">
    <property type="term" value="F:metal ion binding"/>
    <property type="evidence" value="ECO:0007669"/>
    <property type="project" value="UniProtKB-KW"/>
</dbReference>
<dbReference type="GO" id="GO:0103039">
    <property type="term" value="F:protein methylthiotransferase activity"/>
    <property type="evidence" value="ECO:0007669"/>
    <property type="project" value="UniProtKB-EC"/>
</dbReference>
<dbReference type="GO" id="GO:0006400">
    <property type="term" value="P:tRNA modification"/>
    <property type="evidence" value="ECO:0007669"/>
    <property type="project" value="InterPro"/>
</dbReference>
<dbReference type="CDD" id="cd01335">
    <property type="entry name" value="Radical_SAM"/>
    <property type="match status" value="1"/>
</dbReference>
<dbReference type="FunFam" id="2.40.50.140:FF:000210">
    <property type="entry name" value="Ribosomal protein S12 methylthiotransferase RimO"/>
    <property type="match status" value="1"/>
</dbReference>
<dbReference type="FunFam" id="3.80.30.20:FF:000001">
    <property type="entry name" value="tRNA-2-methylthio-N(6)-dimethylallyladenosine synthase 2"/>
    <property type="match status" value="1"/>
</dbReference>
<dbReference type="Gene3D" id="3.40.50.12160">
    <property type="entry name" value="Methylthiotransferase, N-terminal domain"/>
    <property type="match status" value="1"/>
</dbReference>
<dbReference type="Gene3D" id="2.40.50.140">
    <property type="entry name" value="Nucleic acid-binding proteins"/>
    <property type="match status" value="1"/>
</dbReference>
<dbReference type="Gene3D" id="3.80.30.20">
    <property type="entry name" value="tm_1862 like domain"/>
    <property type="match status" value="1"/>
</dbReference>
<dbReference type="HAMAP" id="MF_01865">
    <property type="entry name" value="MTTase_RimO"/>
    <property type="match status" value="1"/>
</dbReference>
<dbReference type="InterPro" id="IPR006638">
    <property type="entry name" value="Elp3/MiaA/NifB-like_rSAM"/>
</dbReference>
<dbReference type="InterPro" id="IPR005839">
    <property type="entry name" value="Methylthiotransferase"/>
</dbReference>
<dbReference type="InterPro" id="IPR020612">
    <property type="entry name" value="Methylthiotransferase_CS"/>
</dbReference>
<dbReference type="InterPro" id="IPR013848">
    <property type="entry name" value="Methylthiotransferase_N"/>
</dbReference>
<dbReference type="InterPro" id="IPR038135">
    <property type="entry name" value="Methylthiotransferase_N_sf"/>
</dbReference>
<dbReference type="InterPro" id="IPR012340">
    <property type="entry name" value="NA-bd_OB-fold"/>
</dbReference>
<dbReference type="InterPro" id="IPR005840">
    <property type="entry name" value="Ribosomal_uS12_MeSTrfase_RimO"/>
</dbReference>
<dbReference type="InterPro" id="IPR007197">
    <property type="entry name" value="rSAM"/>
</dbReference>
<dbReference type="InterPro" id="IPR023404">
    <property type="entry name" value="rSAM_horseshoe"/>
</dbReference>
<dbReference type="InterPro" id="IPR002792">
    <property type="entry name" value="TRAM_dom"/>
</dbReference>
<dbReference type="NCBIfam" id="TIGR01125">
    <property type="entry name" value="30S ribosomal protein S12 methylthiotransferase RimO"/>
    <property type="match status" value="1"/>
</dbReference>
<dbReference type="NCBIfam" id="TIGR00089">
    <property type="entry name" value="MiaB/RimO family radical SAM methylthiotransferase"/>
    <property type="match status" value="1"/>
</dbReference>
<dbReference type="PANTHER" id="PTHR43837">
    <property type="entry name" value="RIBOSOMAL PROTEIN S12 METHYLTHIOTRANSFERASE RIMO"/>
    <property type="match status" value="1"/>
</dbReference>
<dbReference type="PANTHER" id="PTHR43837:SF1">
    <property type="entry name" value="RIBOSOMAL PROTEIN US12 METHYLTHIOTRANSFERASE RIMO"/>
    <property type="match status" value="1"/>
</dbReference>
<dbReference type="Pfam" id="PF04055">
    <property type="entry name" value="Radical_SAM"/>
    <property type="match status" value="1"/>
</dbReference>
<dbReference type="Pfam" id="PF18693">
    <property type="entry name" value="TRAM_2"/>
    <property type="match status" value="1"/>
</dbReference>
<dbReference type="Pfam" id="PF00919">
    <property type="entry name" value="UPF0004"/>
    <property type="match status" value="1"/>
</dbReference>
<dbReference type="SFLD" id="SFLDG01082">
    <property type="entry name" value="B12-binding_domain_containing"/>
    <property type="match status" value="1"/>
</dbReference>
<dbReference type="SFLD" id="SFLDS00029">
    <property type="entry name" value="Radical_SAM"/>
    <property type="match status" value="1"/>
</dbReference>
<dbReference type="SFLD" id="SFLDF00274">
    <property type="entry name" value="ribosomal_protein_S12_methylth"/>
    <property type="match status" value="1"/>
</dbReference>
<dbReference type="SMART" id="SM00729">
    <property type="entry name" value="Elp3"/>
    <property type="match status" value="1"/>
</dbReference>
<dbReference type="SUPFAM" id="SSF102114">
    <property type="entry name" value="Radical SAM enzymes"/>
    <property type="match status" value="1"/>
</dbReference>
<dbReference type="PROSITE" id="PS51449">
    <property type="entry name" value="MTTASE_N"/>
    <property type="match status" value="1"/>
</dbReference>
<dbReference type="PROSITE" id="PS01278">
    <property type="entry name" value="MTTASE_RADICAL"/>
    <property type="match status" value="1"/>
</dbReference>
<dbReference type="PROSITE" id="PS51918">
    <property type="entry name" value="RADICAL_SAM"/>
    <property type="match status" value="1"/>
</dbReference>
<dbReference type="PROSITE" id="PS50926">
    <property type="entry name" value="TRAM"/>
    <property type="match status" value="1"/>
</dbReference>
<reference key="1">
    <citation type="journal article" date="2001" name="J. Bacteriol.">
        <title>Genome sequence and comparative analysis of the solvent-producing bacterium Clostridium acetobutylicum.</title>
        <authorList>
            <person name="Noelling J."/>
            <person name="Breton G."/>
            <person name="Omelchenko M.V."/>
            <person name="Makarova K.S."/>
            <person name="Zeng Q."/>
            <person name="Gibson R."/>
            <person name="Lee H.M."/>
            <person name="Dubois J."/>
            <person name="Qiu D."/>
            <person name="Hitti J."/>
            <person name="Wolf Y.I."/>
            <person name="Tatusov R.L."/>
            <person name="Sabathe F."/>
            <person name="Doucette-Stamm L.A."/>
            <person name="Soucaille P."/>
            <person name="Daly M.J."/>
            <person name="Bennett G.N."/>
            <person name="Koonin E.V."/>
            <person name="Smith D.R."/>
        </authorList>
    </citation>
    <scope>NUCLEOTIDE SEQUENCE [LARGE SCALE GENOMIC DNA]</scope>
    <source>
        <strain>ATCC 824 / DSM 792 / JCM 1419 / IAM 19013 / LMG 5710 / NBRC 13948 / NRRL B-527 / VKM B-1787 / 2291 / W</strain>
    </source>
</reference>
<comment type="function">
    <text evidence="1">Catalyzes the methylthiolation of an aspartic acid residue of ribosomal protein uS12.</text>
</comment>
<comment type="catalytic activity">
    <reaction evidence="1">
        <text>L-aspartate(89)-[ribosomal protein uS12]-hydrogen + (sulfur carrier)-SH + AH2 + 2 S-adenosyl-L-methionine = 3-methylsulfanyl-L-aspartate(89)-[ribosomal protein uS12]-hydrogen + (sulfur carrier)-H + 5'-deoxyadenosine + L-methionine + A + S-adenosyl-L-homocysteine + 2 H(+)</text>
        <dbReference type="Rhea" id="RHEA:37087"/>
        <dbReference type="Rhea" id="RHEA-COMP:10460"/>
        <dbReference type="Rhea" id="RHEA-COMP:10461"/>
        <dbReference type="Rhea" id="RHEA-COMP:14737"/>
        <dbReference type="Rhea" id="RHEA-COMP:14739"/>
        <dbReference type="ChEBI" id="CHEBI:13193"/>
        <dbReference type="ChEBI" id="CHEBI:15378"/>
        <dbReference type="ChEBI" id="CHEBI:17319"/>
        <dbReference type="ChEBI" id="CHEBI:17499"/>
        <dbReference type="ChEBI" id="CHEBI:29917"/>
        <dbReference type="ChEBI" id="CHEBI:29961"/>
        <dbReference type="ChEBI" id="CHEBI:57844"/>
        <dbReference type="ChEBI" id="CHEBI:57856"/>
        <dbReference type="ChEBI" id="CHEBI:59789"/>
        <dbReference type="ChEBI" id="CHEBI:64428"/>
        <dbReference type="ChEBI" id="CHEBI:73599"/>
        <dbReference type="EC" id="2.8.4.4"/>
    </reaction>
</comment>
<comment type="cofactor">
    <cofactor evidence="1">
        <name>[4Fe-4S] cluster</name>
        <dbReference type="ChEBI" id="CHEBI:49883"/>
    </cofactor>
    <text evidence="1">Binds 2 [4Fe-4S] clusters. One cluster is coordinated with 3 cysteines and an exchangeable S-adenosyl-L-methionine.</text>
</comment>
<comment type="subcellular location">
    <subcellularLocation>
        <location evidence="1">Cytoplasm</location>
    </subcellularLocation>
</comment>
<comment type="similarity">
    <text evidence="1">Belongs to the methylthiotransferase family. RimO subfamily.</text>
</comment>